<feature type="chain" id="PRO_1000148733" description="Acetyl-coenzyme A carboxylase carboxyl transferase subunit alpha">
    <location>
        <begin position="1"/>
        <end position="324"/>
    </location>
</feature>
<feature type="domain" description="CoA carboxyltransferase C-terminal" evidence="2">
    <location>
        <begin position="37"/>
        <end position="291"/>
    </location>
</feature>
<organism>
    <name type="scientific">Bacillus cereus (strain Q1)</name>
    <dbReference type="NCBI Taxonomy" id="361100"/>
    <lineage>
        <taxon>Bacteria</taxon>
        <taxon>Bacillati</taxon>
        <taxon>Bacillota</taxon>
        <taxon>Bacilli</taxon>
        <taxon>Bacillales</taxon>
        <taxon>Bacillaceae</taxon>
        <taxon>Bacillus</taxon>
        <taxon>Bacillus cereus group</taxon>
    </lineage>
</organism>
<gene>
    <name evidence="1" type="primary">accA</name>
    <name type="ordered locus">BCQ_4404</name>
</gene>
<keyword id="KW-0067">ATP-binding</keyword>
<keyword id="KW-0963">Cytoplasm</keyword>
<keyword id="KW-0275">Fatty acid biosynthesis</keyword>
<keyword id="KW-0276">Fatty acid metabolism</keyword>
<keyword id="KW-0444">Lipid biosynthesis</keyword>
<keyword id="KW-0443">Lipid metabolism</keyword>
<keyword id="KW-0547">Nucleotide-binding</keyword>
<keyword id="KW-0808">Transferase</keyword>
<accession>B9J0A0</accession>
<sequence>MAELEFEKPVVELRNKIRELKDYTKNSQMDFSEEIRILEDKLENLEEDIYGNMKVWDRVQIARHAERPTTLDYIEHLFTDFFECHGDRLFGDDAAIVGGIAKYKGMPVTVIGHQRGKDTKENIRRNFGMPHPEGYRKALRLMKQAEKFNRPIICFIDTKGAYPGKAAEERGQSEAIARNLFEMAGLTVPVICIVIGEGGSGGALGLGVGDYIHMLENSTYSVITPEGAAAILWKDAGKAKEAAEAMRITAADLKELGVIDEIIPEAKGGAHRNVLKQSENIDLMLRKTFEQLNGISKDELIEKRYEKYMKIGQVSFSNASIWIK</sequence>
<reference key="1">
    <citation type="journal article" date="2009" name="J. Bacteriol.">
        <title>Complete genome sequence of the extremophilic Bacillus cereus strain Q1 with industrial applications.</title>
        <authorList>
            <person name="Xiong Z."/>
            <person name="Jiang Y."/>
            <person name="Qi D."/>
            <person name="Lu H."/>
            <person name="Yang F."/>
            <person name="Yang J."/>
            <person name="Chen L."/>
            <person name="Sun L."/>
            <person name="Xu X."/>
            <person name="Xue Y."/>
            <person name="Zhu Y."/>
            <person name="Jin Q."/>
        </authorList>
    </citation>
    <scope>NUCLEOTIDE SEQUENCE [LARGE SCALE GENOMIC DNA]</scope>
    <source>
        <strain>Q1</strain>
    </source>
</reference>
<evidence type="ECO:0000255" key="1">
    <source>
        <dbReference type="HAMAP-Rule" id="MF_00823"/>
    </source>
</evidence>
<evidence type="ECO:0000255" key="2">
    <source>
        <dbReference type="PROSITE-ProRule" id="PRU01137"/>
    </source>
</evidence>
<dbReference type="EC" id="2.1.3.15" evidence="1"/>
<dbReference type="EMBL" id="CP000227">
    <property type="protein sequence ID" value="ACM14830.1"/>
    <property type="molecule type" value="Genomic_DNA"/>
</dbReference>
<dbReference type="SMR" id="B9J0A0"/>
<dbReference type="KEGG" id="bcq:BCQ_4404"/>
<dbReference type="HOGENOM" id="CLU_015486_0_2_9"/>
<dbReference type="UniPathway" id="UPA00655">
    <property type="reaction ID" value="UER00711"/>
</dbReference>
<dbReference type="Proteomes" id="UP000000441">
    <property type="component" value="Chromosome"/>
</dbReference>
<dbReference type="GO" id="GO:0009317">
    <property type="term" value="C:acetyl-CoA carboxylase complex"/>
    <property type="evidence" value="ECO:0007669"/>
    <property type="project" value="InterPro"/>
</dbReference>
<dbReference type="GO" id="GO:0003989">
    <property type="term" value="F:acetyl-CoA carboxylase activity"/>
    <property type="evidence" value="ECO:0007669"/>
    <property type="project" value="InterPro"/>
</dbReference>
<dbReference type="GO" id="GO:0005524">
    <property type="term" value="F:ATP binding"/>
    <property type="evidence" value="ECO:0007669"/>
    <property type="project" value="UniProtKB-KW"/>
</dbReference>
<dbReference type="GO" id="GO:0016743">
    <property type="term" value="F:carboxyl- or carbamoyltransferase activity"/>
    <property type="evidence" value="ECO:0007669"/>
    <property type="project" value="UniProtKB-UniRule"/>
</dbReference>
<dbReference type="GO" id="GO:0006633">
    <property type="term" value="P:fatty acid biosynthetic process"/>
    <property type="evidence" value="ECO:0007669"/>
    <property type="project" value="UniProtKB-KW"/>
</dbReference>
<dbReference type="GO" id="GO:2001295">
    <property type="term" value="P:malonyl-CoA biosynthetic process"/>
    <property type="evidence" value="ECO:0007669"/>
    <property type="project" value="UniProtKB-UniRule"/>
</dbReference>
<dbReference type="Gene3D" id="3.90.226.10">
    <property type="entry name" value="2-enoyl-CoA Hydratase, Chain A, domain 1"/>
    <property type="match status" value="1"/>
</dbReference>
<dbReference type="HAMAP" id="MF_00823">
    <property type="entry name" value="AcetylCoA_CT_alpha"/>
    <property type="match status" value="1"/>
</dbReference>
<dbReference type="InterPro" id="IPR001095">
    <property type="entry name" value="Acetyl_CoA_COase_a_su"/>
</dbReference>
<dbReference type="InterPro" id="IPR029045">
    <property type="entry name" value="ClpP/crotonase-like_dom_sf"/>
</dbReference>
<dbReference type="InterPro" id="IPR011763">
    <property type="entry name" value="COA_CT_C"/>
</dbReference>
<dbReference type="NCBIfam" id="TIGR00513">
    <property type="entry name" value="accA"/>
    <property type="match status" value="1"/>
</dbReference>
<dbReference type="NCBIfam" id="NF041504">
    <property type="entry name" value="AccA_sub"/>
    <property type="match status" value="1"/>
</dbReference>
<dbReference type="NCBIfam" id="NF004344">
    <property type="entry name" value="PRK05724.1"/>
    <property type="match status" value="1"/>
</dbReference>
<dbReference type="PANTHER" id="PTHR42853">
    <property type="entry name" value="ACETYL-COENZYME A CARBOXYLASE CARBOXYL TRANSFERASE SUBUNIT ALPHA"/>
    <property type="match status" value="1"/>
</dbReference>
<dbReference type="PANTHER" id="PTHR42853:SF3">
    <property type="entry name" value="ACETYL-COENZYME A CARBOXYLASE CARBOXYL TRANSFERASE SUBUNIT ALPHA, CHLOROPLASTIC"/>
    <property type="match status" value="1"/>
</dbReference>
<dbReference type="Pfam" id="PF03255">
    <property type="entry name" value="ACCA"/>
    <property type="match status" value="1"/>
</dbReference>
<dbReference type="PRINTS" id="PR01069">
    <property type="entry name" value="ACCCTRFRASEA"/>
</dbReference>
<dbReference type="SUPFAM" id="SSF52096">
    <property type="entry name" value="ClpP/crotonase"/>
    <property type="match status" value="1"/>
</dbReference>
<dbReference type="PROSITE" id="PS50989">
    <property type="entry name" value="COA_CT_CTER"/>
    <property type="match status" value="1"/>
</dbReference>
<protein>
    <recommendedName>
        <fullName evidence="1">Acetyl-coenzyme A carboxylase carboxyl transferase subunit alpha</fullName>
        <shortName evidence="1">ACCase subunit alpha</shortName>
        <shortName evidence="1">Acetyl-CoA carboxylase carboxyltransferase subunit alpha</shortName>
        <ecNumber evidence="1">2.1.3.15</ecNumber>
    </recommendedName>
</protein>
<comment type="function">
    <text evidence="1">Component of the acetyl coenzyme A carboxylase (ACC) complex. First, biotin carboxylase catalyzes the carboxylation of biotin on its carrier protein (BCCP) and then the CO(2) group is transferred by the carboxyltransferase to acetyl-CoA to form malonyl-CoA.</text>
</comment>
<comment type="catalytic activity">
    <reaction evidence="1">
        <text>N(6)-carboxybiotinyl-L-lysyl-[protein] + acetyl-CoA = N(6)-biotinyl-L-lysyl-[protein] + malonyl-CoA</text>
        <dbReference type="Rhea" id="RHEA:54728"/>
        <dbReference type="Rhea" id="RHEA-COMP:10505"/>
        <dbReference type="Rhea" id="RHEA-COMP:10506"/>
        <dbReference type="ChEBI" id="CHEBI:57288"/>
        <dbReference type="ChEBI" id="CHEBI:57384"/>
        <dbReference type="ChEBI" id="CHEBI:83144"/>
        <dbReference type="ChEBI" id="CHEBI:83145"/>
        <dbReference type="EC" id="2.1.3.15"/>
    </reaction>
</comment>
<comment type="pathway">
    <text evidence="1">Lipid metabolism; malonyl-CoA biosynthesis; malonyl-CoA from acetyl-CoA: step 1/1.</text>
</comment>
<comment type="subunit">
    <text evidence="1">Acetyl-CoA carboxylase is a heterohexamer composed of biotin carboxyl carrier protein (AccB), biotin carboxylase (AccC) and two subunits each of ACCase subunit alpha (AccA) and ACCase subunit beta (AccD).</text>
</comment>
<comment type="subcellular location">
    <subcellularLocation>
        <location evidence="1">Cytoplasm</location>
    </subcellularLocation>
</comment>
<comment type="similarity">
    <text evidence="1">Belongs to the AccA family.</text>
</comment>
<name>ACCA_BACCQ</name>
<proteinExistence type="inferred from homology"/>